<proteinExistence type="inferred from homology"/>
<dbReference type="EC" id="3.6.4.13"/>
<dbReference type="EMBL" id="CP000498">
    <property type="protein sequence ID" value="ABN66365.2"/>
    <property type="molecule type" value="Genomic_DNA"/>
</dbReference>
<dbReference type="RefSeq" id="XP_001384394.2">
    <property type="nucleotide sequence ID" value="XM_001384357.1"/>
</dbReference>
<dbReference type="SMR" id="A3LT90"/>
<dbReference type="FunCoup" id="A3LT90">
    <property type="interactions" value="146"/>
</dbReference>
<dbReference type="STRING" id="322104.A3LT90"/>
<dbReference type="GeneID" id="4838839"/>
<dbReference type="KEGG" id="pic:PICST_31323"/>
<dbReference type="eggNOG" id="KOG0335">
    <property type="taxonomic scope" value="Eukaryota"/>
</dbReference>
<dbReference type="HOGENOM" id="CLU_003041_18_0_1"/>
<dbReference type="InParanoid" id="A3LT90"/>
<dbReference type="OMA" id="HSTIDFI"/>
<dbReference type="OrthoDB" id="10256233at2759"/>
<dbReference type="Proteomes" id="UP000002258">
    <property type="component" value="Chromosome 4"/>
</dbReference>
<dbReference type="GO" id="GO:0005739">
    <property type="term" value="C:mitochondrion"/>
    <property type="evidence" value="ECO:0007669"/>
    <property type="project" value="UniProtKB-SubCell"/>
</dbReference>
<dbReference type="GO" id="GO:0005524">
    <property type="term" value="F:ATP binding"/>
    <property type="evidence" value="ECO:0007669"/>
    <property type="project" value="UniProtKB-KW"/>
</dbReference>
<dbReference type="GO" id="GO:0016887">
    <property type="term" value="F:ATP hydrolysis activity"/>
    <property type="evidence" value="ECO:0007669"/>
    <property type="project" value="RHEA"/>
</dbReference>
<dbReference type="GO" id="GO:0003723">
    <property type="term" value="F:RNA binding"/>
    <property type="evidence" value="ECO:0007669"/>
    <property type="project" value="UniProtKB-KW"/>
</dbReference>
<dbReference type="GO" id="GO:0003724">
    <property type="term" value="F:RNA helicase activity"/>
    <property type="evidence" value="ECO:0007669"/>
    <property type="project" value="UniProtKB-EC"/>
</dbReference>
<dbReference type="CDD" id="cd18787">
    <property type="entry name" value="SF2_C_DEAD"/>
    <property type="match status" value="1"/>
</dbReference>
<dbReference type="Gene3D" id="3.40.50.300">
    <property type="entry name" value="P-loop containing nucleotide triphosphate hydrolases"/>
    <property type="match status" value="2"/>
</dbReference>
<dbReference type="InterPro" id="IPR011545">
    <property type="entry name" value="DEAD/DEAH_box_helicase_dom"/>
</dbReference>
<dbReference type="InterPro" id="IPR014001">
    <property type="entry name" value="Helicase_ATP-bd"/>
</dbReference>
<dbReference type="InterPro" id="IPR001650">
    <property type="entry name" value="Helicase_C-like"/>
</dbReference>
<dbReference type="InterPro" id="IPR027417">
    <property type="entry name" value="P-loop_NTPase"/>
</dbReference>
<dbReference type="PANTHER" id="PTHR24031">
    <property type="entry name" value="RNA HELICASE"/>
    <property type="match status" value="1"/>
</dbReference>
<dbReference type="Pfam" id="PF00270">
    <property type="entry name" value="DEAD"/>
    <property type="match status" value="1"/>
</dbReference>
<dbReference type="Pfam" id="PF00271">
    <property type="entry name" value="Helicase_C"/>
    <property type="match status" value="1"/>
</dbReference>
<dbReference type="SMART" id="SM00487">
    <property type="entry name" value="DEXDc"/>
    <property type="match status" value="1"/>
</dbReference>
<dbReference type="SMART" id="SM00490">
    <property type="entry name" value="HELICc"/>
    <property type="match status" value="1"/>
</dbReference>
<dbReference type="SUPFAM" id="SSF52540">
    <property type="entry name" value="P-loop containing nucleoside triphosphate hydrolases"/>
    <property type="match status" value="1"/>
</dbReference>
<dbReference type="PROSITE" id="PS51192">
    <property type="entry name" value="HELICASE_ATP_BIND_1"/>
    <property type="match status" value="1"/>
</dbReference>
<dbReference type="PROSITE" id="PS51194">
    <property type="entry name" value="HELICASE_CTER"/>
    <property type="match status" value="1"/>
</dbReference>
<organism>
    <name type="scientific">Scheffersomyces stipitis (strain ATCC 58785 / CBS 6054 / NBRC 10063 / NRRL Y-11545)</name>
    <name type="common">Yeast</name>
    <name type="synonym">Pichia stipitis</name>
    <dbReference type="NCBI Taxonomy" id="322104"/>
    <lineage>
        <taxon>Eukaryota</taxon>
        <taxon>Fungi</taxon>
        <taxon>Dikarya</taxon>
        <taxon>Ascomycota</taxon>
        <taxon>Saccharomycotina</taxon>
        <taxon>Pichiomycetes</taxon>
        <taxon>Debaryomycetaceae</taxon>
        <taxon>Scheffersomyces</taxon>
    </lineage>
</organism>
<evidence type="ECO:0000250" key="1"/>
<evidence type="ECO:0000255" key="2"/>
<evidence type="ECO:0000255" key="3">
    <source>
        <dbReference type="PROSITE-ProRule" id="PRU00541"/>
    </source>
</evidence>
<evidence type="ECO:0000255" key="4">
    <source>
        <dbReference type="PROSITE-ProRule" id="PRU00542"/>
    </source>
</evidence>
<evidence type="ECO:0000256" key="5">
    <source>
        <dbReference type="SAM" id="MobiDB-lite"/>
    </source>
</evidence>
<evidence type="ECO:0000305" key="6"/>
<name>MRH4_PICST</name>
<gene>
    <name type="primary">MRH4</name>
    <name type="ORF">PICST_31323</name>
</gene>
<sequence length="593" mass="66206">MFPLRAQSASLGANSTLFFRAYAVSHRKSGSKIQAWKGLKRGANGANRANGTNSSQPESQSSKAVFQSGKFSQLHQPSKKVYEKSSSGLDSISTFEQLRIFPTVRAAMVAEIKSTYNMKGPRYQSKDELVLKPTPIQVAAIRKINQPRLKNNKNVKEEEVSAGRKSAPSTADLVNEEFKKINSLQKLKVFTLAAETGSGKTWAYLSSLLSKLKEDEFGLYESSEEKYRASRNAQMVKSVVLVPTHDLVEQVYSTLERANSIKFDVEKIGANSRLKEFLQLPEQNGSLNLSILKWGSGEAHKKLFDRCLKGRVDVLVTTPGKLASLSKLQNVNRPYRFLNHVEYCVLDEADTLMDESWIETTMPVIEKFKKLRDLIICSATIPKRFQTTLNRIFPTDDSIINIVTPSLHKLPKQIKVSVIDSELSPYHGSKTRALAQALYAITRDGTEPGLVKRVIVFVNKKESVNSLVDTLVNKFSHRPEDVIGITGEDKPEERSEKLEPFIKPAESIEEDPLNSKIKVLVTSDLMARGVNFVGIKNVIIMDIPHNSVDLVHRIGRTGRMNQSGRVILIVDKKKNKAWLSGLPNAVKRGIQMG</sequence>
<feature type="transit peptide" description="Mitochondrion" evidence="2">
    <location>
        <begin position="1"/>
        <end position="106"/>
    </location>
</feature>
<feature type="chain" id="PRO_0000285157" description="ATP-dependent RNA helicase MRH4, mitochondrial">
    <location>
        <begin position="107"/>
        <end position="593"/>
    </location>
</feature>
<feature type="domain" description="Helicase ATP-binding" evidence="3">
    <location>
        <begin position="181"/>
        <end position="399"/>
    </location>
</feature>
<feature type="domain" description="Helicase C-terminal" evidence="4">
    <location>
        <begin position="433"/>
        <end position="593"/>
    </location>
</feature>
<feature type="region of interest" description="Disordered" evidence="5">
    <location>
        <begin position="42"/>
        <end position="63"/>
    </location>
</feature>
<feature type="short sequence motif" description="Q motif">
    <location>
        <begin position="130"/>
        <end position="137"/>
    </location>
</feature>
<feature type="short sequence motif" description="DEAD box">
    <location>
        <begin position="347"/>
        <end position="350"/>
    </location>
</feature>
<feature type="compositionally biased region" description="Low complexity" evidence="5">
    <location>
        <begin position="42"/>
        <end position="51"/>
    </location>
</feature>
<feature type="compositionally biased region" description="Polar residues" evidence="5">
    <location>
        <begin position="52"/>
        <end position="63"/>
    </location>
</feature>
<feature type="binding site" evidence="3">
    <location>
        <begin position="194"/>
        <end position="201"/>
    </location>
    <ligand>
        <name>ATP</name>
        <dbReference type="ChEBI" id="CHEBI:30616"/>
    </ligand>
</feature>
<protein>
    <recommendedName>
        <fullName>ATP-dependent RNA helicase MRH4, mitochondrial</fullName>
        <ecNumber>3.6.4.13</ecNumber>
    </recommendedName>
</protein>
<keyword id="KW-0067">ATP-binding</keyword>
<keyword id="KW-0347">Helicase</keyword>
<keyword id="KW-0378">Hydrolase</keyword>
<keyword id="KW-0496">Mitochondrion</keyword>
<keyword id="KW-0547">Nucleotide-binding</keyword>
<keyword id="KW-1185">Reference proteome</keyword>
<keyword id="KW-0694">RNA-binding</keyword>
<keyword id="KW-0809">Transit peptide</keyword>
<reference key="1">
    <citation type="journal article" date="2007" name="Nat. Biotechnol.">
        <title>Genome sequence of the lignocellulose-bioconverting and xylose-fermenting yeast Pichia stipitis.</title>
        <authorList>
            <person name="Jeffries T.W."/>
            <person name="Grigoriev I.V."/>
            <person name="Grimwood J."/>
            <person name="Laplaza J.M."/>
            <person name="Aerts A."/>
            <person name="Salamov A."/>
            <person name="Schmutz J."/>
            <person name="Lindquist E."/>
            <person name="Dehal P."/>
            <person name="Shapiro H."/>
            <person name="Jin Y.-S."/>
            <person name="Passoth V."/>
            <person name="Richardson P.M."/>
        </authorList>
    </citation>
    <scope>NUCLEOTIDE SEQUENCE [LARGE SCALE GENOMIC DNA]</scope>
    <source>
        <strain>ATCC 58785 / CBS 6054 / NBRC 10063 / NRRL Y-11545</strain>
    </source>
</reference>
<comment type="function">
    <text evidence="1">ATP-binding RNA helicase involved in mitochondrial RNA metabolism. Required for maintenance of mitochondrial DNA (By similarity).</text>
</comment>
<comment type="catalytic activity">
    <reaction>
        <text>ATP + H2O = ADP + phosphate + H(+)</text>
        <dbReference type="Rhea" id="RHEA:13065"/>
        <dbReference type="ChEBI" id="CHEBI:15377"/>
        <dbReference type="ChEBI" id="CHEBI:15378"/>
        <dbReference type="ChEBI" id="CHEBI:30616"/>
        <dbReference type="ChEBI" id="CHEBI:43474"/>
        <dbReference type="ChEBI" id="CHEBI:456216"/>
        <dbReference type="EC" id="3.6.4.13"/>
    </reaction>
</comment>
<comment type="subcellular location">
    <subcellularLocation>
        <location evidence="1">Mitochondrion</location>
    </subcellularLocation>
</comment>
<comment type="domain">
    <text>The Q motif is unique to and characteristic of the DEAD box family of RNA helicases and controls ATP binding and hydrolysis.</text>
</comment>
<comment type="similarity">
    <text evidence="6">Belongs to the DEAD box helicase family. MRH4 subfamily.</text>
</comment>
<accession>A3LT90</accession>